<proteinExistence type="evidence at transcript level"/>
<comment type="function">
    <text evidence="1">Putative transporter.</text>
</comment>
<comment type="subcellular location">
    <subcellularLocation>
        <location evidence="3">Membrane</location>
        <topology evidence="3">Multi-pass membrane protein</topology>
    </subcellularLocation>
</comment>
<comment type="similarity">
    <text evidence="3">Belongs to the TPT transporter family. SLC35E subfamily.</text>
</comment>
<dbReference type="EMBL" id="BC006601">
    <property type="protein sequence ID" value="AAH06601.1"/>
    <property type="molecule type" value="mRNA"/>
</dbReference>
<dbReference type="EMBL" id="BC057101">
    <property type="protein sequence ID" value="AAH57101.1"/>
    <property type="molecule type" value="mRNA"/>
</dbReference>
<dbReference type="CCDS" id="CCDS24195.1"/>
<dbReference type="RefSeq" id="NP_084151.2">
    <property type="nucleotide sequence ID" value="NM_029875.2"/>
</dbReference>
<dbReference type="SMR" id="Q6PGC7"/>
<dbReference type="BioGRID" id="229625">
    <property type="interactions" value="1"/>
</dbReference>
<dbReference type="FunCoup" id="Q6PGC7">
    <property type="interactions" value="1116"/>
</dbReference>
<dbReference type="STRING" id="10090.ENSMUSP00000078050"/>
<dbReference type="TCDB" id="2.A.7.9.10">
    <property type="family name" value="the drug/metabolite transporter (dmt) superfamily"/>
</dbReference>
<dbReference type="PhosphoSitePlus" id="Q6PGC7"/>
<dbReference type="PaxDb" id="10090-ENSMUSP00000078050"/>
<dbReference type="ProteomicsDB" id="256677"/>
<dbReference type="Antibodypedia" id="59245">
    <property type="antibodies" value="8 antibodies from 7 providers"/>
</dbReference>
<dbReference type="DNASU" id="215436"/>
<dbReference type="Ensembl" id="ENSMUST00000079041.7">
    <property type="protein sequence ID" value="ENSMUSP00000078050.6"/>
    <property type="gene ID" value="ENSMUSG00000060181.7"/>
</dbReference>
<dbReference type="GeneID" id="215436"/>
<dbReference type="KEGG" id="mmu:215436"/>
<dbReference type="UCSC" id="uc007hdn.1">
    <property type="organism name" value="mouse"/>
</dbReference>
<dbReference type="AGR" id="MGI:2448489"/>
<dbReference type="CTD" id="55508"/>
<dbReference type="MGI" id="MGI:2448489">
    <property type="gene designation" value="Slc35e3"/>
</dbReference>
<dbReference type="VEuPathDB" id="HostDB:ENSMUSG00000060181"/>
<dbReference type="eggNOG" id="KOG1441">
    <property type="taxonomic scope" value="Eukaryota"/>
</dbReference>
<dbReference type="GeneTree" id="ENSGT00730000111164"/>
<dbReference type="HOGENOM" id="CLU_048347_3_2_1"/>
<dbReference type="InParanoid" id="Q6PGC7"/>
<dbReference type="OMA" id="WMVVNTL"/>
<dbReference type="OrthoDB" id="5547497at2759"/>
<dbReference type="PhylomeDB" id="Q6PGC7"/>
<dbReference type="TreeFam" id="TF329429"/>
<dbReference type="BioGRID-ORCS" id="215436">
    <property type="hits" value="2 hits in 76 CRISPR screens"/>
</dbReference>
<dbReference type="ChiTaRS" id="Slc35e3">
    <property type="organism name" value="mouse"/>
</dbReference>
<dbReference type="PRO" id="PR:Q6PGC7"/>
<dbReference type="Proteomes" id="UP000000589">
    <property type="component" value="Chromosome 10"/>
</dbReference>
<dbReference type="RNAct" id="Q6PGC7">
    <property type="molecule type" value="protein"/>
</dbReference>
<dbReference type="Bgee" id="ENSMUSG00000060181">
    <property type="expression patterns" value="Expressed in humerus cartilage element and 253 other cell types or tissues"/>
</dbReference>
<dbReference type="GO" id="GO:0016020">
    <property type="term" value="C:membrane"/>
    <property type="evidence" value="ECO:0007669"/>
    <property type="project" value="UniProtKB-SubCell"/>
</dbReference>
<dbReference type="InterPro" id="IPR004853">
    <property type="entry name" value="Sugar_P_trans_dom"/>
</dbReference>
<dbReference type="InterPro" id="IPR050186">
    <property type="entry name" value="TPT_transporter"/>
</dbReference>
<dbReference type="PANTHER" id="PTHR11132">
    <property type="entry name" value="SOLUTE CARRIER FAMILY 35"/>
    <property type="match status" value="1"/>
</dbReference>
<dbReference type="Pfam" id="PF03151">
    <property type="entry name" value="TPT"/>
    <property type="match status" value="1"/>
</dbReference>
<dbReference type="SUPFAM" id="SSF103481">
    <property type="entry name" value="Multidrug resistance efflux transporter EmrE"/>
    <property type="match status" value="1"/>
</dbReference>
<accession>Q6PGC7</accession>
<protein>
    <recommendedName>
        <fullName>Solute carrier family 35 member E3</fullName>
    </recommendedName>
</protein>
<name>S35E3_MOUSE</name>
<organism>
    <name type="scientific">Mus musculus</name>
    <name type="common">Mouse</name>
    <dbReference type="NCBI Taxonomy" id="10090"/>
    <lineage>
        <taxon>Eukaryota</taxon>
        <taxon>Metazoa</taxon>
        <taxon>Chordata</taxon>
        <taxon>Craniata</taxon>
        <taxon>Vertebrata</taxon>
        <taxon>Euteleostomi</taxon>
        <taxon>Mammalia</taxon>
        <taxon>Eutheria</taxon>
        <taxon>Euarchontoglires</taxon>
        <taxon>Glires</taxon>
        <taxon>Rodentia</taxon>
        <taxon>Myomorpha</taxon>
        <taxon>Muroidea</taxon>
        <taxon>Muridae</taxon>
        <taxon>Murinae</taxon>
        <taxon>Mus</taxon>
        <taxon>Mus</taxon>
    </lineage>
</organism>
<evidence type="ECO:0000250" key="1"/>
<evidence type="ECO:0000255" key="2"/>
<evidence type="ECO:0000305" key="3"/>
<gene>
    <name type="primary">Slc35e3</name>
</gene>
<reference key="1">
    <citation type="journal article" date="2004" name="Genome Res.">
        <title>The status, quality, and expansion of the NIH full-length cDNA project: the Mammalian Gene Collection (MGC).</title>
        <authorList>
            <consortium name="The MGC Project Team"/>
        </authorList>
    </citation>
    <scope>NUCLEOTIDE SEQUENCE [LARGE SCALE MRNA]</scope>
    <source>
        <strain>C57BL/6J</strain>
        <strain>FVB/N</strain>
    </source>
</reference>
<keyword id="KW-0472">Membrane</keyword>
<keyword id="KW-1185">Reference proteome</keyword>
<keyword id="KW-0812">Transmembrane</keyword>
<keyword id="KW-1133">Transmembrane helix</keyword>
<sequence length="313" mass="34892">MASLADRVRGNGRIAAGLLFNLLVSICIVFLNKWIYVHHGFPNMSLTLVHFVVTWLGLYICQKLNIFAPKSLPLSKLLLLALSFCGFVVFTNLSLQNNTIGTYQLAKAMTTPVIIAIQTFWYQKRFSVRIQLTLIPITVGVILNSYYDVKFHSLGMVFAALGVVVTSLYQVWVGAKQHELQVNSMQLLYYQAPMSSAMLLVAVPFFEPVFAEGGIFGPWSVSALLMVLLSGIIAFMVNLSIYWIIGNTSPVTYNMFGHFKFCITLCGGYILFKDPLSVNQGLGILCTLFGILTYTHFKLSEQEGSKSKLVQRP</sequence>
<feature type="chain" id="PRO_0000297900" description="Solute carrier family 35 member E3">
    <location>
        <begin position="1"/>
        <end position="313"/>
    </location>
</feature>
<feature type="transmembrane region" description="Helical" evidence="2">
    <location>
        <begin position="17"/>
        <end position="37"/>
    </location>
</feature>
<feature type="transmembrane region" description="Helical" evidence="2">
    <location>
        <begin position="40"/>
        <end position="60"/>
    </location>
</feature>
<feature type="transmembrane region" description="Helical" evidence="2">
    <location>
        <begin position="71"/>
        <end position="91"/>
    </location>
</feature>
<feature type="transmembrane region" description="Helical" evidence="2">
    <location>
        <begin position="126"/>
        <end position="146"/>
    </location>
</feature>
<feature type="transmembrane region" description="Helical" evidence="2">
    <location>
        <begin position="154"/>
        <end position="174"/>
    </location>
</feature>
<feature type="transmembrane region" description="Helical" evidence="2">
    <location>
        <begin position="187"/>
        <end position="206"/>
    </location>
</feature>
<feature type="transmembrane region" description="Helical" evidence="2">
    <location>
        <begin position="225"/>
        <end position="245"/>
    </location>
</feature>
<feature type="transmembrane region" description="Helical" evidence="2">
    <location>
        <begin position="252"/>
        <end position="272"/>
    </location>
</feature>
<feature type="transmembrane region" description="Helical" evidence="2">
    <location>
        <begin position="275"/>
        <end position="295"/>
    </location>
</feature>